<reference key="1">
    <citation type="journal article" date="2000" name="Genome Res.">
        <title>Cloning and functional analysis of cDNAs with open reading frames for 300 previously undefined genes expressed in CD34+ hematopoietic stem/progenitor cells.</title>
        <authorList>
            <person name="Zhang Q.-H."/>
            <person name="Ye M."/>
            <person name="Wu X.-Y."/>
            <person name="Ren S.-X."/>
            <person name="Zhao M."/>
            <person name="Zhao C.-J."/>
            <person name="Fu G."/>
            <person name="Shen Y."/>
            <person name="Fan H.-Y."/>
            <person name="Lu G."/>
            <person name="Zhong M."/>
            <person name="Xu X.-R."/>
            <person name="Han Z.-G."/>
            <person name="Zhang J.-W."/>
            <person name="Tao J."/>
            <person name="Huang Q.-H."/>
            <person name="Zhou J."/>
            <person name="Hu G.-X."/>
            <person name="Gu J."/>
            <person name="Chen S.-J."/>
            <person name="Chen Z."/>
        </authorList>
    </citation>
    <scope>NUCLEOTIDE SEQUENCE [LARGE SCALE MRNA] (ISOFORM 1)</scope>
    <source>
        <tissue>Umbilical cord blood</tissue>
    </source>
</reference>
<reference key="2">
    <citation type="submission" date="1998-11" db="EMBL/GenBank/DDBJ databases">
        <authorList>
            <person name="Hui R.T."/>
            <person name="Liu Y.Q."/>
            <person name="Liu B."/>
            <person name="Zhao B."/>
            <person name="Meng X.M."/>
            <person name="Sheng H."/>
            <person name="Xu Y.Y."/>
            <person name="Wang X.Y."/>
            <person name="Ye J."/>
            <person name="Song L."/>
            <person name="Gao Y."/>
            <person name="Wei Y.J."/>
            <person name="Zhang C.L."/>
            <person name="Zhang J."/>
            <person name="Chai M.Q."/>
            <person name="Chen J.Z."/>
            <person name="Sun Y.H."/>
            <person name="Zhou X.L."/>
            <person name="Jiang Y.X."/>
            <person name="Zhao X.W."/>
            <person name="Liu S."/>
            <person name="Cao H.Q."/>
            <person name="Zhao Y."/>
            <person name="Liu D.Q."/>
            <person name="Ding J.F."/>
            <person name="Liu L.S."/>
            <person name="Gao R.L."/>
            <person name="Wu Q.Y."/>
            <person name="Qiang B.Q."/>
            <person name="Yuan J.G."/>
            <person name="Liew C.C."/>
            <person name="Zhao M.S."/>
        </authorList>
    </citation>
    <scope>NUCLEOTIDE SEQUENCE [LARGE SCALE MRNA] (ISOFORM 1)</scope>
    <source>
        <tissue>Aorta</tissue>
    </source>
</reference>
<reference key="3">
    <citation type="journal article" date="2004" name="Genome Biol.">
        <title>A genome annotation-driven approach to cloning the human ORFeome.</title>
        <authorList>
            <person name="Collins J.E."/>
            <person name="Wright C.L."/>
            <person name="Edwards C.A."/>
            <person name="Davis M.P."/>
            <person name="Grinham J.A."/>
            <person name="Cole C.G."/>
            <person name="Goward M.E."/>
            <person name="Aguado B."/>
            <person name="Mallya M."/>
            <person name="Mokrab Y."/>
            <person name="Huckle E.J."/>
            <person name="Beare D.M."/>
            <person name="Dunham I."/>
        </authorList>
    </citation>
    <scope>NUCLEOTIDE SEQUENCE [LARGE SCALE MRNA] (ISOFORM 1)</scope>
</reference>
<reference key="4">
    <citation type="journal article" date="2004" name="Nat. Genet.">
        <title>Complete sequencing and characterization of 21,243 full-length human cDNAs.</title>
        <authorList>
            <person name="Ota T."/>
            <person name="Suzuki Y."/>
            <person name="Nishikawa T."/>
            <person name="Otsuki T."/>
            <person name="Sugiyama T."/>
            <person name="Irie R."/>
            <person name="Wakamatsu A."/>
            <person name="Hayashi K."/>
            <person name="Sato H."/>
            <person name="Nagai K."/>
            <person name="Kimura K."/>
            <person name="Makita H."/>
            <person name="Sekine M."/>
            <person name="Obayashi M."/>
            <person name="Nishi T."/>
            <person name="Shibahara T."/>
            <person name="Tanaka T."/>
            <person name="Ishii S."/>
            <person name="Yamamoto J."/>
            <person name="Saito K."/>
            <person name="Kawai Y."/>
            <person name="Isono Y."/>
            <person name="Nakamura Y."/>
            <person name="Nagahari K."/>
            <person name="Murakami K."/>
            <person name="Yasuda T."/>
            <person name="Iwayanagi T."/>
            <person name="Wagatsuma M."/>
            <person name="Shiratori A."/>
            <person name="Sudo H."/>
            <person name="Hosoiri T."/>
            <person name="Kaku Y."/>
            <person name="Kodaira H."/>
            <person name="Kondo H."/>
            <person name="Sugawara M."/>
            <person name="Takahashi M."/>
            <person name="Kanda K."/>
            <person name="Yokoi T."/>
            <person name="Furuya T."/>
            <person name="Kikkawa E."/>
            <person name="Omura Y."/>
            <person name="Abe K."/>
            <person name="Kamihara K."/>
            <person name="Katsuta N."/>
            <person name="Sato K."/>
            <person name="Tanikawa M."/>
            <person name="Yamazaki M."/>
            <person name="Ninomiya K."/>
            <person name="Ishibashi T."/>
            <person name="Yamashita H."/>
            <person name="Murakawa K."/>
            <person name="Fujimori K."/>
            <person name="Tanai H."/>
            <person name="Kimata M."/>
            <person name="Watanabe M."/>
            <person name="Hiraoka S."/>
            <person name="Chiba Y."/>
            <person name="Ishida S."/>
            <person name="Ono Y."/>
            <person name="Takiguchi S."/>
            <person name="Watanabe S."/>
            <person name="Yosida M."/>
            <person name="Hotuta T."/>
            <person name="Kusano J."/>
            <person name="Kanehori K."/>
            <person name="Takahashi-Fujii A."/>
            <person name="Hara H."/>
            <person name="Tanase T.-O."/>
            <person name="Nomura Y."/>
            <person name="Togiya S."/>
            <person name="Komai F."/>
            <person name="Hara R."/>
            <person name="Takeuchi K."/>
            <person name="Arita M."/>
            <person name="Imose N."/>
            <person name="Musashino K."/>
            <person name="Yuuki H."/>
            <person name="Oshima A."/>
            <person name="Sasaki N."/>
            <person name="Aotsuka S."/>
            <person name="Yoshikawa Y."/>
            <person name="Matsunawa H."/>
            <person name="Ichihara T."/>
            <person name="Shiohata N."/>
            <person name="Sano S."/>
            <person name="Moriya S."/>
            <person name="Momiyama H."/>
            <person name="Satoh N."/>
            <person name="Takami S."/>
            <person name="Terashima Y."/>
            <person name="Suzuki O."/>
            <person name="Nakagawa S."/>
            <person name="Senoh A."/>
            <person name="Mizoguchi H."/>
            <person name="Goto Y."/>
            <person name="Shimizu F."/>
            <person name="Wakebe H."/>
            <person name="Hishigaki H."/>
            <person name="Watanabe T."/>
            <person name="Sugiyama A."/>
            <person name="Takemoto M."/>
            <person name="Kawakami B."/>
            <person name="Yamazaki M."/>
            <person name="Watanabe K."/>
            <person name="Kumagai A."/>
            <person name="Itakura S."/>
            <person name="Fukuzumi Y."/>
            <person name="Fujimori Y."/>
            <person name="Komiyama M."/>
            <person name="Tashiro H."/>
            <person name="Tanigami A."/>
            <person name="Fujiwara T."/>
            <person name="Ono T."/>
            <person name="Yamada K."/>
            <person name="Fujii Y."/>
            <person name="Ozaki K."/>
            <person name="Hirao M."/>
            <person name="Ohmori Y."/>
            <person name="Kawabata A."/>
            <person name="Hikiji T."/>
            <person name="Kobatake N."/>
            <person name="Inagaki H."/>
            <person name="Ikema Y."/>
            <person name="Okamoto S."/>
            <person name="Okitani R."/>
            <person name="Kawakami T."/>
            <person name="Noguchi S."/>
            <person name="Itoh T."/>
            <person name="Shigeta K."/>
            <person name="Senba T."/>
            <person name="Matsumura K."/>
            <person name="Nakajima Y."/>
            <person name="Mizuno T."/>
            <person name="Morinaga M."/>
            <person name="Sasaki M."/>
            <person name="Togashi T."/>
            <person name="Oyama M."/>
            <person name="Hata H."/>
            <person name="Watanabe M."/>
            <person name="Komatsu T."/>
            <person name="Mizushima-Sugano J."/>
            <person name="Satoh T."/>
            <person name="Shirai Y."/>
            <person name="Takahashi Y."/>
            <person name="Nakagawa K."/>
            <person name="Okumura K."/>
            <person name="Nagase T."/>
            <person name="Nomura N."/>
            <person name="Kikuchi H."/>
            <person name="Masuho Y."/>
            <person name="Yamashita R."/>
            <person name="Nakai K."/>
            <person name="Yada T."/>
            <person name="Nakamura Y."/>
            <person name="Ohara O."/>
            <person name="Isogai T."/>
            <person name="Sugano S."/>
        </authorList>
    </citation>
    <scope>NUCLEOTIDE SEQUENCE [LARGE SCALE MRNA] (ISOFORMS 1 AND 2)</scope>
    <source>
        <tissue>Testis</tissue>
    </source>
</reference>
<reference key="5">
    <citation type="submission" date="2005-04" db="EMBL/GenBank/DDBJ databases">
        <authorList>
            <person name="Suzuki Y."/>
            <person name="Sugano S."/>
            <person name="Totoki Y."/>
            <person name="Toyoda A."/>
            <person name="Takeda T."/>
            <person name="Sakaki Y."/>
            <person name="Tanaka A."/>
            <person name="Yokoyama S."/>
        </authorList>
    </citation>
    <scope>NUCLEOTIDE SEQUENCE [LARGE SCALE MRNA] (ISOFORM 1)</scope>
    <source>
        <tissue>Adipose tissue</tissue>
    </source>
</reference>
<reference key="6">
    <citation type="journal article" date="1999" name="Nature">
        <title>The DNA sequence of human chromosome 22.</title>
        <authorList>
            <person name="Dunham I."/>
            <person name="Hunt A.R."/>
            <person name="Collins J.E."/>
            <person name="Bruskiewich R."/>
            <person name="Beare D.M."/>
            <person name="Clamp M."/>
            <person name="Smink L.J."/>
            <person name="Ainscough R."/>
            <person name="Almeida J.P."/>
            <person name="Babbage A.K."/>
            <person name="Bagguley C."/>
            <person name="Bailey J."/>
            <person name="Barlow K.F."/>
            <person name="Bates K.N."/>
            <person name="Beasley O.P."/>
            <person name="Bird C.P."/>
            <person name="Blakey S.E."/>
            <person name="Bridgeman A.M."/>
            <person name="Buck D."/>
            <person name="Burgess J."/>
            <person name="Burrill W.D."/>
            <person name="Burton J."/>
            <person name="Carder C."/>
            <person name="Carter N.P."/>
            <person name="Chen Y."/>
            <person name="Clark G."/>
            <person name="Clegg S.M."/>
            <person name="Cobley V.E."/>
            <person name="Cole C.G."/>
            <person name="Collier R.E."/>
            <person name="Connor R."/>
            <person name="Conroy D."/>
            <person name="Corby N.R."/>
            <person name="Coville G.J."/>
            <person name="Cox A.V."/>
            <person name="Davis J."/>
            <person name="Dawson E."/>
            <person name="Dhami P.D."/>
            <person name="Dockree C."/>
            <person name="Dodsworth S.J."/>
            <person name="Durbin R.M."/>
            <person name="Ellington A.G."/>
            <person name="Evans K.L."/>
            <person name="Fey J.M."/>
            <person name="Fleming K."/>
            <person name="French L."/>
            <person name="Garner A.A."/>
            <person name="Gilbert J.G.R."/>
            <person name="Goward M.E."/>
            <person name="Grafham D.V."/>
            <person name="Griffiths M.N.D."/>
            <person name="Hall C."/>
            <person name="Hall R.E."/>
            <person name="Hall-Tamlyn G."/>
            <person name="Heathcott R.W."/>
            <person name="Ho S."/>
            <person name="Holmes S."/>
            <person name="Hunt S.E."/>
            <person name="Jones M.C."/>
            <person name="Kershaw J."/>
            <person name="Kimberley A.M."/>
            <person name="King A."/>
            <person name="Laird G.K."/>
            <person name="Langford C.F."/>
            <person name="Leversha M.A."/>
            <person name="Lloyd C."/>
            <person name="Lloyd D.M."/>
            <person name="Martyn I.D."/>
            <person name="Mashreghi-Mohammadi M."/>
            <person name="Matthews L.H."/>
            <person name="Mccann O.T."/>
            <person name="Mcclay J."/>
            <person name="Mclaren S."/>
            <person name="McMurray A.A."/>
            <person name="Milne S.A."/>
            <person name="Mortimore B.J."/>
            <person name="Odell C.N."/>
            <person name="Pavitt R."/>
            <person name="Pearce A.V."/>
            <person name="Pearson D."/>
            <person name="Phillimore B.J.C.T."/>
            <person name="Phillips S.H."/>
            <person name="Plumb R.W."/>
            <person name="Ramsay H."/>
            <person name="Ramsey Y."/>
            <person name="Rogers L."/>
            <person name="Ross M.T."/>
            <person name="Scott C.E."/>
            <person name="Sehra H.K."/>
            <person name="Skuce C.D."/>
            <person name="Smalley S."/>
            <person name="Smith M.L."/>
            <person name="Soderlund C."/>
            <person name="Spragon L."/>
            <person name="Steward C.A."/>
            <person name="Sulston J.E."/>
            <person name="Swann R.M."/>
            <person name="Vaudin M."/>
            <person name="Wall M."/>
            <person name="Wallis J.M."/>
            <person name="Whiteley M.N."/>
            <person name="Willey D.L."/>
            <person name="Williams L."/>
            <person name="Williams S.A."/>
            <person name="Williamson H."/>
            <person name="Wilmer T.E."/>
            <person name="Wilming L."/>
            <person name="Wright C.L."/>
            <person name="Hubbard T."/>
            <person name="Bentley D.R."/>
            <person name="Beck S."/>
            <person name="Rogers J."/>
            <person name="Shimizu N."/>
            <person name="Minoshima S."/>
            <person name="Kawasaki K."/>
            <person name="Sasaki T."/>
            <person name="Asakawa S."/>
            <person name="Kudoh J."/>
            <person name="Shintani A."/>
            <person name="Shibuya K."/>
            <person name="Yoshizaki Y."/>
            <person name="Aoki N."/>
            <person name="Mitsuyama S."/>
            <person name="Roe B.A."/>
            <person name="Chen F."/>
            <person name="Chu L."/>
            <person name="Crabtree J."/>
            <person name="Deschamps S."/>
            <person name="Do A."/>
            <person name="Do T."/>
            <person name="Dorman A."/>
            <person name="Fang F."/>
            <person name="Fu Y."/>
            <person name="Hu P."/>
            <person name="Hua A."/>
            <person name="Kenton S."/>
            <person name="Lai H."/>
            <person name="Lao H.I."/>
            <person name="Lewis J."/>
            <person name="Lewis S."/>
            <person name="Lin S.-P."/>
            <person name="Loh P."/>
            <person name="Malaj E."/>
            <person name="Nguyen T."/>
            <person name="Pan H."/>
            <person name="Phan S."/>
            <person name="Qi S."/>
            <person name="Qian Y."/>
            <person name="Ray L."/>
            <person name="Ren Q."/>
            <person name="Shaull S."/>
            <person name="Sloan D."/>
            <person name="Song L."/>
            <person name="Wang Q."/>
            <person name="Wang Y."/>
            <person name="Wang Z."/>
            <person name="White J."/>
            <person name="Willingham D."/>
            <person name="Wu H."/>
            <person name="Yao Z."/>
            <person name="Zhan M."/>
            <person name="Zhang G."/>
            <person name="Chissoe S."/>
            <person name="Murray J."/>
            <person name="Miller N."/>
            <person name="Minx P."/>
            <person name="Fulton R."/>
            <person name="Johnson D."/>
            <person name="Bemis G."/>
            <person name="Bentley D."/>
            <person name="Bradshaw H."/>
            <person name="Bourne S."/>
            <person name="Cordes M."/>
            <person name="Du Z."/>
            <person name="Fulton L."/>
            <person name="Goela D."/>
            <person name="Graves T."/>
            <person name="Hawkins J."/>
            <person name="Hinds K."/>
            <person name="Kemp K."/>
            <person name="Latreille P."/>
            <person name="Layman D."/>
            <person name="Ozersky P."/>
            <person name="Rohlfing T."/>
            <person name="Scheet P."/>
            <person name="Walker C."/>
            <person name="Wamsley A."/>
            <person name="Wohldmann P."/>
            <person name="Pepin K."/>
            <person name="Nelson J."/>
            <person name="Korf I."/>
            <person name="Bedell J.A."/>
            <person name="Hillier L.W."/>
            <person name="Mardis E."/>
            <person name="Waterston R."/>
            <person name="Wilson R."/>
            <person name="Emanuel B.S."/>
            <person name="Shaikh T."/>
            <person name="Kurahashi H."/>
            <person name="Saitta S."/>
            <person name="Budarf M.L."/>
            <person name="McDermid H.E."/>
            <person name="Johnson A."/>
            <person name="Wong A.C.C."/>
            <person name="Morrow B.E."/>
            <person name="Edelmann L."/>
            <person name="Kim U.J."/>
            <person name="Shizuya H."/>
            <person name="Simon M.I."/>
            <person name="Dumanski J.P."/>
            <person name="Peyrard M."/>
            <person name="Kedra D."/>
            <person name="Seroussi E."/>
            <person name="Fransson I."/>
            <person name="Tapia I."/>
            <person name="Bruder C.E."/>
            <person name="O'Brien K.P."/>
            <person name="Wilkinson P."/>
            <person name="Bodenteich A."/>
            <person name="Hartman K."/>
            <person name="Hu X."/>
            <person name="Khan A.S."/>
            <person name="Lane L."/>
            <person name="Tilahun Y."/>
            <person name="Wright H."/>
        </authorList>
    </citation>
    <scope>NUCLEOTIDE SEQUENCE [LARGE SCALE GENOMIC DNA]</scope>
</reference>
<reference key="7">
    <citation type="submission" date="2005-07" db="EMBL/GenBank/DDBJ databases">
        <authorList>
            <person name="Mural R.J."/>
            <person name="Istrail S."/>
            <person name="Sutton G.G."/>
            <person name="Florea L."/>
            <person name="Halpern A.L."/>
            <person name="Mobarry C.M."/>
            <person name="Lippert R."/>
            <person name="Walenz B."/>
            <person name="Shatkay H."/>
            <person name="Dew I."/>
            <person name="Miller J.R."/>
            <person name="Flanigan M.J."/>
            <person name="Edwards N.J."/>
            <person name="Bolanos R."/>
            <person name="Fasulo D."/>
            <person name="Halldorsson B.V."/>
            <person name="Hannenhalli S."/>
            <person name="Turner R."/>
            <person name="Yooseph S."/>
            <person name="Lu F."/>
            <person name="Nusskern D.R."/>
            <person name="Shue B.C."/>
            <person name="Zheng X.H."/>
            <person name="Zhong F."/>
            <person name="Delcher A.L."/>
            <person name="Huson D.H."/>
            <person name="Kravitz S.A."/>
            <person name="Mouchard L."/>
            <person name="Reinert K."/>
            <person name="Remington K.A."/>
            <person name="Clark A.G."/>
            <person name="Waterman M.S."/>
            <person name="Eichler E.E."/>
            <person name="Adams M.D."/>
            <person name="Hunkapiller M.W."/>
            <person name="Myers E.W."/>
            <person name="Venter J.C."/>
        </authorList>
    </citation>
    <scope>NUCLEOTIDE SEQUENCE [LARGE SCALE GENOMIC DNA]</scope>
</reference>
<reference key="8">
    <citation type="journal article" date="2004" name="Genome Res.">
        <title>The status, quality, and expansion of the NIH full-length cDNA project: the Mammalian Gene Collection (MGC).</title>
        <authorList>
            <consortium name="The MGC Project Team"/>
        </authorList>
    </citation>
    <scope>NUCLEOTIDE SEQUENCE [LARGE SCALE MRNA] (ISOFORM 1)</scope>
    <source>
        <tissue>Brain</tissue>
        <tissue>Cervix</tissue>
        <tissue>Colon</tissue>
    </source>
</reference>
<reference key="9">
    <citation type="journal article" date="2001" name="J. Biol. Chem.">
        <title>The human protein HSPC021 interacts with Int-6 and is associated with eukaryotic translation initiation factor 3.</title>
        <authorList>
            <person name="Morris-Desbois C."/>
            <person name="Rety S."/>
            <person name="Ferro M."/>
            <person name="Garin J."/>
            <person name="Jalinot P."/>
        </authorList>
    </citation>
    <scope>INTERACTION WITH EIF3E</scope>
</reference>
<reference key="10">
    <citation type="journal article" date="2002" name="EMBO Rep.">
        <title>Multiple interactions between RNA polymerase I, TIF-IA and TAF(I) subunits regulate preinitiation complex assembly at the ribosomal gene promoter.</title>
        <authorList>
            <person name="Yuan X."/>
            <person name="Zhao J."/>
            <person name="Zentgraf H."/>
            <person name="Hoffmann-Rohrer U."/>
            <person name="Grummt I."/>
        </authorList>
    </citation>
    <scope>INTERACTION WITH RRN3</scope>
</reference>
<reference key="11">
    <citation type="journal article" date="2003" name="Nature">
        <title>Proteomic characterization of the human centrosome by protein correlation profiling.</title>
        <authorList>
            <person name="Andersen J.S."/>
            <person name="Wilkinson C.J."/>
            <person name="Mayor T."/>
            <person name="Mortensen P."/>
            <person name="Nigg E.A."/>
            <person name="Mann M."/>
        </authorList>
    </citation>
    <scope>IDENTIFICATION BY MASS SPECTROMETRY</scope>
    <source>
        <tissue>Lymphoblast</tissue>
    </source>
</reference>
<reference key="12">
    <citation type="journal article" date="2005" name="RNA">
        <title>Binding of eukaryotic initiation factor 3 to ribosomal 40S subunits and its role in ribosomal dissociation and anti-association.</title>
        <authorList>
            <person name="Kolupaeva V.G."/>
            <person name="Unbehaun A."/>
            <person name="Lomakin I.B."/>
            <person name="Hellen C.U.T."/>
            <person name="Pestova T.V."/>
        </authorList>
    </citation>
    <scope>CHARACTERIZATION OF THE EIF-3 COMPLEX</scope>
</reference>
<reference key="13">
    <citation type="journal article" date="2006" name="J. Biol. Chem.">
        <title>Translation initiation factor eIF4G-1 binds to eIF3 through the eIF3e subunit.</title>
        <authorList>
            <person name="LeFebvre A.K."/>
            <person name="Korneeva N.L."/>
            <person name="Trutschl M."/>
            <person name="Cvek U."/>
            <person name="Duzan R.D."/>
            <person name="Bradley C.A."/>
            <person name="Hershey J.W.B."/>
            <person name="Rhoads R.E."/>
        </authorList>
    </citation>
    <scope>IDENTIFICATION IN THE EIF-3 COMPLEX</scope>
    <scope>IDENTIFICATION BY MASS SPECTROMETRY</scope>
</reference>
<reference key="14">
    <citation type="journal article" date="2007" name="EMBO J.">
        <title>Reconstitution reveals the functional core of mammalian eIF3.</title>
        <authorList>
            <person name="Masutani M."/>
            <person name="Sonenberg N."/>
            <person name="Yokoyama S."/>
            <person name="Imataka H."/>
        </authorList>
    </citation>
    <scope>FUNCTION</scope>
    <scope>CHARACTERIZATION OF THE EIF-3 COMPLEX</scope>
</reference>
<reference key="15">
    <citation type="journal article" date="2007" name="Genes Dev.">
        <title>The mechanism of an exceptional case of reinitiation after translation of a long ORF reveals why such events do not generally occur in mammalian mRNA translation.</title>
        <authorList>
            <person name="Poyry T.A."/>
            <person name="Kaminski A."/>
            <person name="Connell E.J."/>
            <person name="Fraser C.S."/>
            <person name="Jackson R.J."/>
        </authorList>
    </citation>
    <scope>FUNCTION (MICROBIAL INFECTION)</scope>
</reference>
<reference key="16">
    <citation type="journal article" date="2007" name="Mol. Cell. Proteomics">
        <title>Structural characterization of the human eukaryotic initiation factor 3 protein complex by mass spectrometry.</title>
        <authorList>
            <person name="Damoc E."/>
            <person name="Fraser C.S."/>
            <person name="Zhou M."/>
            <person name="Videler H."/>
            <person name="Mayeur G.L."/>
            <person name="Hershey J.W.B."/>
            <person name="Doudna J.A."/>
            <person name="Robinson C.V."/>
            <person name="Leary J.A."/>
        </authorList>
    </citation>
    <scope>IDENTIFICATION IN THE EIF-3 COMPLEX</scope>
    <scope>CHARACTERIZATION OF THE EIF-3 COMPLEX</scope>
    <scope>CLEAVAGE OF INITIATOR METHIONINE</scope>
    <scope>ACETYLATION AT SER-2</scope>
    <scope>MASS SPECTROMETRY</scope>
</reference>
<reference key="17">
    <citation type="journal article" date="2008" name="Proc. Natl. Acad. Sci. U.S.A.">
        <title>Mass spectrometry reveals modularity and a complete subunit interaction map of the eukaryotic translation factor eIF3.</title>
        <authorList>
            <person name="Zhou M."/>
            <person name="Sandercock A.M."/>
            <person name="Fraser C.S."/>
            <person name="Ridlova G."/>
            <person name="Stephens E."/>
            <person name="Schenauer M.R."/>
            <person name="Yokoi-Fong T."/>
            <person name="Barsky D."/>
            <person name="Leary J.A."/>
            <person name="Hershey J.W.B."/>
            <person name="Doudna J.A."/>
            <person name="Robinson C.V."/>
        </authorList>
    </citation>
    <scope>IDENTIFICATION IN THE EIF-3 COMPLEX</scope>
    <scope>CHARACTERIZATION OF THE EIF-3 COMPLEX</scope>
    <scope>MASS SPECTROMETRY</scope>
    <scope>INTERACTION WITH EIF3B</scope>
</reference>
<reference key="18">
    <citation type="journal article" date="2009" name="Anal. Chem.">
        <title>Lys-N and trypsin cover complementary parts of the phosphoproteome in a refined SCX-based approach.</title>
        <authorList>
            <person name="Gauci S."/>
            <person name="Helbig A.O."/>
            <person name="Slijper M."/>
            <person name="Krijgsveld J."/>
            <person name="Heck A.J."/>
            <person name="Mohammed S."/>
        </authorList>
    </citation>
    <scope>ACETYLATION [LARGE SCALE ANALYSIS] AT SER-2</scope>
    <scope>CLEAVAGE OF INITIATOR METHIONINE [LARGE SCALE ANALYSIS]</scope>
    <scope>IDENTIFICATION BY MASS SPECTROMETRY [LARGE SCALE ANALYSIS]</scope>
</reference>
<reference key="19">
    <citation type="journal article" date="2009" name="Science">
        <title>Lysine acetylation targets protein complexes and co-regulates major cellular functions.</title>
        <authorList>
            <person name="Choudhary C."/>
            <person name="Kumar C."/>
            <person name="Gnad F."/>
            <person name="Nielsen M.L."/>
            <person name="Rehman M."/>
            <person name="Walther T.C."/>
            <person name="Olsen J.V."/>
            <person name="Mann M."/>
        </authorList>
    </citation>
    <scope>ACETYLATION [LARGE SCALE ANALYSIS] AT LYS-465 AND LYS-549</scope>
    <scope>IDENTIFICATION BY MASS SPECTROMETRY [LARGE SCALE ANALYSIS]</scope>
</reference>
<reference key="20">
    <citation type="journal article" date="2011" name="BMC Syst. Biol.">
        <title>Initial characterization of the human central proteome.</title>
        <authorList>
            <person name="Burkard T.R."/>
            <person name="Planyavsky M."/>
            <person name="Kaupe I."/>
            <person name="Breitwieser F.P."/>
            <person name="Buerckstuemmer T."/>
            <person name="Bennett K.L."/>
            <person name="Superti-Furga G."/>
            <person name="Colinge J."/>
        </authorList>
    </citation>
    <scope>IDENTIFICATION BY MASS SPECTROMETRY [LARGE SCALE ANALYSIS]</scope>
</reference>
<reference key="21">
    <citation type="journal article" date="2012" name="Mol. Cell. Proteomics">
        <title>Comparative large-scale characterisation of plant vs. mammal proteins reveals similar and idiosyncratic N-alpha acetylation features.</title>
        <authorList>
            <person name="Bienvenut W.V."/>
            <person name="Sumpton D."/>
            <person name="Martinez A."/>
            <person name="Lilla S."/>
            <person name="Espagne C."/>
            <person name="Meinnel T."/>
            <person name="Giglione C."/>
        </authorList>
    </citation>
    <scope>ACETYLATION [LARGE SCALE ANALYSIS] AT SER-2</scope>
    <scope>CLEAVAGE OF INITIATOR METHIONINE [LARGE SCALE ANALYSIS]</scope>
    <scope>IDENTIFICATION BY MASS SPECTROMETRY [LARGE SCALE ANALYSIS]</scope>
</reference>
<reference key="22">
    <citation type="journal article" date="2014" name="J. Proteomics">
        <title>An enzyme assisted RP-RPLC approach for in-depth analysis of human liver phosphoproteome.</title>
        <authorList>
            <person name="Bian Y."/>
            <person name="Song C."/>
            <person name="Cheng K."/>
            <person name="Dong M."/>
            <person name="Wang F."/>
            <person name="Huang J."/>
            <person name="Sun D."/>
            <person name="Wang L."/>
            <person name="Ye M."/>
            <person name="Zou H."/>
        </authorList>
    </citation>
    <scope>PHOSPHORYLATION [LARGE SCALE ANALYSIS] AT SER-21</scope>
    <scope>IDENTIFICATION BY MASS SPECTROMETRY [LARGE SCALE ANALYSIS]</scope>
    <source>
        <tissue>Liver</tissue>
    </source>
</reference>
<reference key="23">
    <citation type="journal article" date="2015" name="Nature">
        <title>eIF3 targets cell-proliferation messenger RNAs for translational activation or repression.</title>
        <authorList>
            <person name="Lee A.S."/>
            <person name="Kranzusch P.J."/>
            <person name="Cate J.H."/>
        </authorList>
    </citation>
    <scope>FUNCTION</scope>
    <scope>IDENTIFICATION IN THE EIF-3 COMPLEX</scope>
</reference>
<reference key="24">
    <citation type="journal article" date="2016" name="Nature">
        <title>eIF3d is an mRNA cap-binding protein that is required for specialized translation initiation.</title>
        <authorList>
            <person name="Lee A.S."/>
            <person name="Kranzusch P.J."/>
            <person name="Doudna J.A."/>
            <person name="Cate J.H."/>
        </authorList>
    </citation>
    <scope>FUNCTION</scope>
</reference>
<reference key="25">
    <citation type="journal article" date="2005" name="Science">
        <title>Structural roles for human translation factor eIF3 in initiation of protein synthesis.</title>
        <authorList>
            <person name="Siridechadilok B."/>
            <person name="Fraser C.S."/>
            <person name="Hall R.J."/>
            <person name="Doudna J.A."/>
            <person name="Nogales E."/>
        </authorList>
    </citation>
    <scope>3D-STRUCTURE MODELING</scope>
    <scope>ELECTRON MICROSCOPY</scope>
</reference>
<proteinExistence type="evidence at protein level"/>
<dbReference type="EMBL" id="AF077207">
    <property type="protein sequence ID" value="AAD27002.1"/>
    <property type="molecule type" value="mRNA"/>
</dbReference>
<dbReference type="EMBL" id="AF083243">
    <property type="protein sequence ID" value="AAD39841.1"/>
    <property type="molecule type" value="mRNA"/>
</dbReference>
<dbReference type="EMBL" id="AF109359">
    <property type="protein sequence ID" value="AAQ13507.1"/>
    <property type="molecule type" value="mRNA"/>
</dbReference>
<dbReference type="EMBL" id="CR456436">
    <property type="protein sequence ID" value="CAG30322.1"/>
    <property type="status" value="ALT_INIT"/>
    <property type="molecule type" value="mRNA"/>
</dbReference>
<dbReference type="EMBL" id="AK302346">
    <property type="protein sequence ID" value="BAG63674.1"/>
    <property type="molecule type" value="mRNA"/>
</dbReference>
<dbReference type="EMBL" id="AK315533">
    <property type="protein sequence ID" value="BAG37913.1"/>
    <property type="molecule type" value="mRNA"/>
</dbReference>
<dbReference type="EMBL" id="AK222496">
    <property type="protein sequence ID" value="BAD96216.1"/>
    <property type="molecule type" value="mRNA"/>
</dbReference>
<dbReference type="EMBL" id="AK222529">
    <property type="protein sequence ID" value="BAD96249.1"/>
    <property type="molecule type" value="mRNA"/>
</dbReference>
<dbReference type="EMBL" id="AL022311">
    <property type="status" value="NOT_ANNOTATED_CDS"/>
    <property type="molecule type" value="Genomic_DNA"/>
</dbReference>
<dbReference type="EMBL" id="Z97630">
    <property type="status" value="NOT_ANNOTATED_CDS"/>
    <property type="molecule type" value="Genomic_DNA"/>
</dbReference>
<dbReference type="EMBL" id="CH471095">
    <property type="protein sequence ID" value="EAW60198.1"/>
    <property type="molecule type" value="Genomic_DNA"/>
</dbReference>
<dbReference type="EMBL" id="BC001101">
    <property type="protein sequence ID" value="AAH01101.1"/>
    <property type="molecule type" value="mRNA"/>
</dbReference>
<dbReference type="EMBL" id="BC007510">
    <property type="protein sequence ID" value="AAH07510.1"/>
    <property type="molecule type" value="mRNA"/>
</dbReference>
<dbReference type="EMBL" id="BC029265">
    <property type="protein sequence ID" value="AAH29265.1"/>
    <property type="molecule type" value="mRNA"/>
</dbReference>
<dbReference type="CCDS" id="CCDS13960.1">
    <molecule id="Q9Y262-1"/>
</dbReference>
<dbReference type="CCDS" id="CCDS56230.1">
    <molecule id="Q9Y262-2"/>
</dbReference>
<dbReference type="RefSeq" id="NP_001229852.1">
    <molecule id="Q9Y262-2"/>
    <property type="nucleotide sequence ID" value="NM_001242923.2"/>
</dbReference>
<dbReference type="RefSeq" id="NP_057175.1">
    <molecule id="Q9Y262-1"/>
    <property type="nucleotide sequence ID" value="NM_016091.4"/>
</dbReference>
<dbReference type="PDB" id="3J8B">
    <property type="method" value="EM"/>
    <property type="chains" value="L=1-515"/>
</dbReference>
<dbReference type="PDB" id="3J8C">
    <property type="method" value="EM"/>
    <property type="chains" value="L=1-515"/>
</dbReference>
<dbReference type="PDB" id="6FEC">
    <property type="method" value="EM"/>
    <property type="resolution" value="6.30 A"/>
    <property type="chains" value="7=1-564"/>
</dbReference>
<dbReference type="PDB" id="6YBD">
    <property type="method" value="EM"/>
    <property type="resolution" value="3.30 A"/>
    <property type="chains" value="5=1-564"/>
</dbReference>
<dbReference type="PDB" id="6ZMW">
    <property type="method" value="EM"/>
    <property type="resolution" value="3.70 A"/>
    <property type="chains" value="5=1-564"/>
</dbReference>
<dbReference type="PDB" id="6ZON">
    <property type="method" value="EM"/>
    <property type="resolution" value="3.00 A"/>
    <property type="chains" value="L=1-564"/>
</dbReference>
<dbReference type="PDB" id="6ZP4">
    <property type="method" value="EM"/>
    <property type="resolution" value="2.90 A"/>
    <property type="chains" value="L=1-564"/>
</dbReference>
<dbReference type="PDB" id="6ZVJ">
    <property type="method" value="EM"/>
    <property type="resolution" value="3.80 A"/>
    <property type="chains" value="L=181-552"/>
</dbReference>
<dbReference type="PDB" id="7A09">
    <property type="method" value="EM"/>
    <property type="resolution" value="3.50 A"/>
    <property type="chains" value="L=1-564"/>
</dbReference>
<dbReference type="PDB" id="7QP6">
    <property type="method" value="EM"/>
    <property type="resolution" value="4.70 A"/>
    <property type="chains" value="5=1-564"/>
</dbReference>
<dbReference type="PDB" id="7QP7">
    <property type="method" value="EM"/>
    <property type="resolution" value="3.70 A"/>
    <property type="chains" value="5=1-564"/>
</dbReference>
<dbReference type="PDB" id="8OZ0">
    <property type="method" value="EM"/>
    <property type="resolution" value="3.50 A"/>
    <property type="chains" value="K=1-564"/>
</dbReference>
<dbReference type="PDB" id="8PJ1">
    <property type="method" value="EM"/>
    <property type="resolution" value="3.40 A"/>
    <property type="chains" value="5=1-564"/>
</dbReference>
<dbReference type="PDB" id="8PJ2">
    <property type="method" value="EM"/>
    <property type="resolution" value="3.40 A"/>
    <property type="chains" value="5=1-564"/>
</dbReference>
<dbReference type="PDB" id="8PJ3">
    <property type="method" value="EM"/>
    <property type="resolution" value="3.70 A"/>
    <property type="chains" value="5=1-564"/>
</dbReference>
<dbReference type="PDB" id="8PJ4">
    <property type="method" value="EM"/>
    <property type="resolution" value="3.20 A"/>
    <property type="chains" value="5=1-564"/>
</dbReference>
<dbReference type="PDB" id="8PJ5">
    <property type="method" value="EM"/>
    <property type="resolution" value="2.90 A"/>
    <property type="chains" value="5=1-564"/>
</dbReference>
<dbReference type="PDB" id="8PJ6">
    <property type="method" value="EM"/>
    <property type="resolution" value="2.90 A"/>
    <property type="chains" value="5=1-564"/>
</dbReference>
<dbReference type="PDB" id="8PPL">
    <property type="method" value="EM"/>
    <property type="resolution" value="2.65 A"/>
    <property type="chains" value="I5=1-564"/>
</dbReference>
<dbReference type="PDB" id="8RG0">
    <property type="method" value="EM"/>
    <property type="resolution" value="3.40 A"/>
    <property type="chains" value="5=1-564"/>
</dbReference>
<dbReference type="PDB" id="8XXN">
    <property type="method" value="EM"/>
    <property type="resolution" value="3.60 A"/>
    <property type="chains" value="3L=1-564"/>
</dbReference>
<dbReference type="PDB" id="9BLN">
    <property type="method" value="EM"/>
    <property type="resolution" value="3.90 A"/>
    <property type="chains" value="5=1-564"/>
</dbReference>
<dbReference type="PDBsum" id="3J8B"/>
<dbReference type="PDBsum" id="3J8C"/>
<dbReference type="PDBsum" id="6FEC"/>
<dbReference type="PDBsum" id="6YBD"/>
<dbReference type="PDBsum" id="6ZMW"/>
<dbReference type="PDBsum" id="6ZON"/>
<dbReference type="PDBsum" id="6ZP4"/>
<dbReference type="PDBsum" id="6ZVJ"/>
<dbReference type="PDBsum" id="7A09"/>
<dbReference type="PDBsum" id="7QP6"/>
<dbReference type="PDBsum" id="7QP7"/>
<dbReference type="PDBsum" id="8OZ0"/>
<dbReference type="PDBsum" id="8PJ1"/>
<dbReference type="PDBsum" id="8PJ2"/>
<dbReference type="PDBsum" id="8PJ3"/>
<dbReference type="PDBsum" id="8PJ4"/>
<dbReference type="PDBsum" id="8PJ5"/>
<dbReference type="PDBsum" id="8PJ6"/>
<dbReference type="PDBsum" id="8PPL"/>
<dbReference type="PDBsum" id="8RG0"/>
<dbReference type="PDBsum" id="8XXN"/>
<dbReference type="PDBsum" id="9BLN"/>
<dbReference type="EMDB" id="EMD-10769"/>
<dbReference type="EMDB" id="EMD-11302"/>
<dbReference type="EMDB" id="EMD-11325"/>
<dbReference type="EMDB" id="EMD-11335"/>
<dbReference type="EMDB" id="EMD-11458"/>
<dbReference type="EMDB" id="EMD-11602"/>
<dbReference type="EMDB" id="EMD-14113"/>
<dbReference type="EMDB" id="EMD-14114"/>
<dbReference type="EMDB" id="EMD-17297"/>
<dbReference type="EMDB" id="EMD-17696"/>
<dbReference type="EMDB" id="EMD-17697"/>
<dbReference type="EMDB" id="EMD-17698"/>
<dbReference type="EMDB" id="EMD-17699"/>
<dbReference type="EMDB" id="EMD-17700"/>
<dbReference type="EMDB" id="EMD-17701"/>
<dbReference type="EMDB" id="EMD-17805"/>
<dbReference type="EMDB" id="EMD-19128"/>
<dbReference type="EMDB" id="EMD-38754"/>
<dbReference type="EMDB" id="EMD-4242"/>
<dbReference type="EMDB" id="EMD-44671"/>
<dbReference type="SMR" id="Q9Y262"/>
<dbReference type="BioGRID" id="119516">
    <property type="interactions" value="260"/>
</dbReference>
<dbReference type="ComplexPortal" id="CPX-6036">
    <property type="entry name" value="Eukaryotic translation initiation factor 3 complex"/>
</dbReference>
<dbReference type="CORUM" id="Q9Y262"/>
<dbReference type="DIP" id="DIP-31172N"/>
<dbReference type="FunCoup" id="Q9Y262">
    <property type="interactions" value="2142"/>
</dbReference>
<dbReference type="IntAct" id="Q9Y262">
    <property type="interactions" value="127"/>
</dbReference>
<dbReference type="MINT" id="Q9Y262"/>
<dbReference type="STRING" id="9606.ENSP00000499067"/>
<dbReference type="GlyGen" id="Q9Y262">
    <property type="glycosylation" value="1 site, 1 O-linked glycan (1 site)"/>
</dbReference>
<dbReference type="iPTMnet" id="Q9Y262"/>
<dbReference type="MetOSite" id="Q9Y262"/>
<dbReference type="PhosphoSitePlus" id="Q9Y262"/>
<dbReference type="SwissPalm" id="Q9Y262"/>
<dbReference type="BioMuta" id="EIF3L"/>
<dbReference type="DMDM" id="23396631"/>
<dbReference type="jPOST" id="Q9Y262"/>
<dbReference type="MassIVE" id="Q9Y262"/>
<dbReference type="PaxDb" id="9606-ENSP00000485663"/>
<dbReference type="PeptideAtlas" id="Q9Y262"/>
<dbReference type="PRIDE" id="Q9Y262"/>
<dbReference type="ProteomicsDB" id="34230"/>
<dbReference type="ProteomicsDB" id="85666">
    <molecule id="Q9Y262-1"/>
</dbReference>
<dbReference type="Pumba" id="Q9Y262"/>
<dbReference type="TopDownProteomics" id="Q9Y262-1">
    <molecule id="Q9Y262-1"/>
</dbReference>
<dbReference type="Antibodypedia" id="221">
    <property type="antibodies" value="146 antibodies from 25 providers"/>
</dbReference>
<dbReference type="DNASU" id="51386"/>
<dbReference type="Ensembl" id="ENST00000381683.10">
    <molecule id="Q9Y262-2"/>
    <property type="protein sequence ID" value="ENSP00000371099.4"/>
    <property type="gene ID" value="ENSG00000100129.18"/>
</dbReference>
<dbReference type="Ensembl" id="ENST00000624234.3">
    <molecule id="Q9Y262-1"/>
    <property type="protein sequence ID" value="ENSP00000485663.1"/>
    <property type="gene ID" value="ENSG00000100129.18"/>
</dbReference>
<dbReference type="Ensembl" id="ENST00000652021.1">
    <molecule id="Q9Y262-1"/>
    <property type="protein sequence ID" value="ENSP00000499067.1"/>
    <property type="gene ID" value="ENSG00000100129.18"/>
</dbReference>
<dbReference type="GeneID" id="51386"/>
<dbReference type="KEGG" id="hsa:51386"/>
<dbReference type="MANE-Select" id="ENST00000652021.1">
    <property type="protein sequence ID" value="ENSP00000499067.1"/>
    <property type="RefSeq nucleotide sequence ID" value="NM_016091.4"/>
    <property type="RefSeq protein sequence ID" value="NP_057175.1"/>
</dbReference>
<dbReference type="UCSC" id="uc003auf.3">
    <molecule id="Q9Y262-1"/>
    <property type="organism name" value="human"/>
</dbReference>
<dbReference type="AGR" id="HGNC:18138"/>
<dbReference type="CTD" id="51386"/>
<dbReference type="DisGeNET" id="51386"/>
<dbReference type="GeneCards" id="EIF3L"/>
<dbReference type="HGNC" id="HGNC:18138">
    <property type="gene designation" value="EIF3L"/>
</dbReference>
<dbReference type="HPA" id="ENSG00000100129">
    <property type="expression patterns" value="Low tissue specificity"/>
</dbReference>
<dbReference type="MIM" id="619197">
    <property type="type" value="gene"/>
</dbReference>
<dbReference type="neXtProt" id="NX_Q9Y262"/>
<dbReference type="OpenTargets" id="ENSG00000100129"/>
<dbReference type="PharmGKB" id="PA27706"/>
<dbReference type="VEuPathDB" id="HostDB:ENSG00000100129"/>
<dbReference type="eggNOG" id="KOG3677">
    <property type="taxonomic scope" value="Eukaryota"/>
</dbReference>
<dbReference type="GeneTree" id="ENSGT00390000000411"/>
<dbReference type="HOGENOM" id="CLU_029210_0_1_1"/>
<dbReference type="InParanoid" id="Q9Y262"/>
<dbReference type="OMA" id="AGWFIRN"/>
<dbReference type="OrthoDB" id="15082at2759"/>
<dbReference type="PAN-GO" id="Q9Y262">
    <property type="GO annotations" value="2 GO annotations based on evolutionary models"/>
</dbReference>
<dbReference type="PhylomeDB" id="Q9Y262"/>
<dbReference type="TreeFam" id="TF101523"/>
<dbReference type="PathwayCommons" id="Q9Y262"/>
<dbReference type="Reactome" id="R-HSA-156827">
    <property type="pathway name" value="L13a-mediated translational silencing of Ceruloplasmin expression"/>
</dbReference>
<dbReference type="Reactome" id="R-HSA-72649">
    <property type="pathway name" value="Translation initiation complex formation"/>
</dbReference>
<dbReference type="Reactome" id="R-HSA-72689">
    <property type="pathway name" value="Formation of a pool of free 40S subunits"/>
</dbReference>
<dbReference type="Reactome" id="R-HSA-72695">
    <property type="pathway name" value="Formation of the ternary complex, and subsequently, the 43S complex"/>
</dbReference>
<dbReference type="Reactome" id="R-HSA-72702">
    <property type="pathway name" value="Ribosomal scanning and start codon recognition"/>
</dbReference>
<dbReference type="Reactome" id="R-HSA-72706">
    <property type="pathway name" value="GTP hydrolysis and joining of the 60S ribosomal subunit"/>
</dbReference>
<dbReference type="SignaLink" id="Q9Y262"/>
<dbReference type="SIGNOR" id="Q9Y262"/>
<dbReference type="BioGRID-ORCS" id="51386">
    <property type="hits" value="265 hits in 1161 CRISPR screens"/>
</dbReference>
<dbReference type="CD-CODE" id="DEE660B4">
    <property type="entry name" value="Stress granule"/>
</dbReference>
<dbReference type="ChiTaRS" id="EIF3L">
    <property type="organism name" value="human"/>
</dbReference>
<dbReference type="EvolutionaryTrace" id="Q9Y262"/>
<dbReference type="GeneWiki" id="EIF3EIP"/>
<dbReference type="GenomeRNAi" id="51386"/>
<dbReference type="Pharos" id="Q9Y262">
    <property type="development level" value="Tbio"/>
</dbReference>
<dbReference type="PRO" id="PR:Q9Y262"/>
<dbReference type="Proteomes" id="UP000005640">
    <property type="component" value="Chromosome 22"/>
</dbReference>
<dbReference type="RNAct" id="Q9Y262">
    <property type="molecule type" value="protein"/>
</dbReference>
<dbReference type="Bgee" id="ENSG00000100129">
    <property type="expression patterns" value="Expressed in cortical plate and 103 other cell types or tissues"/>
</dbReference>
<dbReference type="ExpressionAtlas" id="Q9Y262">
    <property type="expression patterns" value="baseline and differential"/>
</dbReference>
<dbReference type="GO" id="GO:0005829">
    <property type="term" value="C:cytosol"/>
    <property type="evidence" value="ECO:0000304"/>
    <property type="project" value="Reactome"/>
</dbReference>
<dbReference type="GO" id="GO:0016282">
    <property type="term" value="C:eukaryotic 43S preinitiation complex"/>
    <property type="evidence" value="ECO:0007669"/>
    <property type="project" value="UniProtKB-UniRule"/>
</dbReference>
<dbReference type="GO" id="GO:0033290">
    <property type="term" value="C:eukaryotic 48S preinitiation complex"/>
    <property type="evidence" value="ECO:0007669"/>
    <property type="project" value="UniProtKB-UniRule"/>
</dbReference>
<dbReference type="GO" id="GO:0005852">
    <property type="term" value="C:eukaryotic translation initiation factor 3 complex"/>
    <property type="evidence" value="ECO:0000314"/>
    <property type="project" value="UniProtKB"/>
</dbReference>
<dbReference type="GO" id="GO:0001650">
    <property type="term" value="C:fibrillar center"/>
    <property type="evidence" value="ECO:0007669"/>
    <property type="project" value="Ensembl"/>
</dbReference>
<dbReference type="GO" id="GO:0016020">
    <property type="term" value="C:membrane"/>
    <property type="evidence" value="ECO:0007005"/>
    <property type="project" value="UniProtKB"/>
</dbReference>
<dbReference type="GO" id="GO:0005654">
    <property type="term" value="C:nucleoplasm"/>
    <property type="evidence" value="ECO:0007669"/>
    <property type="project" value="Ensembl"/>
</dbReference>
<dbReference type="GO" id="GO:0045202">
    <property type="term" value="C:synapse"/>
    <property type="evidence" value="ECO:0007669"/>
    <property type="project" value="Ensembl"/>
</dbReference>
<dbReference type="GO" id="GO:0003723">
    <property type="term" value="F:RNA binding"/>
    <property type="evidence" value="ECO:0007005"/>
    <property type="project" value="UniProtKB"/>
</dbReference>
<dbReference type="GO" id="GO:0003743">
    <property type="term" value="F:translation initiation factor activity"/>
    <property type="evidence" value="ECO:0007669"/>
    <property type="project" value="UniProtKB-UniRule"/>
</dbReference>
<dbReference type="GO" id="GO:0001732">
    <property type="term" value="P:formation of cytoplasmic translation initiation complex"/>
    <property type="evidence" value="ECO:0000303"/>
    <property type="project" value="ComplexPortal"/>
</dbReference>
<dbReference type="GO" id="GO:0006413">
    <property type="term" value="P:translational initiation"/>
    <property type="evidence" value="ECO:0000314"/>
    <property type="project" value="UniProtKB"/>
</dbReference>
<dbReference type="GO" id="GO:0075525">
    <property type="term" value="P:viral translational termination-reinitiation"/>
    <property type="evidence" value="ECO:0000314"/>
    <property type="project" value="UniProtKB"/>
</dbReference>
<dbReference type="HAMAP" id="MF_03011">
    <property type="entry name" value="eIF3l"/>
    <property type="match status" value="1"/>
</dbReference>
<dbReference type="InterPro" id="IPR019382">
    <property type="entry name" value="eIF3l"/>
</dbReference>
<dbReference type="InterPro" id="IPR000717">
    <property type="entry name" value="PCI_dom"/>
</dbReference>
<dbReference type="InterPro" id="IPR011990">
    <property type="entry name" value="TPR-like_helical_dom_sf"/>
</dbReference>
<dbReference type="PANTHER" id="PTHR13242">
    <property type="entry name" value="EUKARYOTIC TRANSLATION INITIATION FACTOR 3"/>
    <property type="match status" value="1"/>
</dbReference>
<dbReference type="PANTHER" id="PTHR13242:SF0">
    <property type="entry name" value="EUKARYOTIC TRANSLATION INITIATION FACTOR 3 SUBUNIT L"/>
    <property type="match status" value="1"/>
</dbReference>
<dbReference type="Pfam" id="PF10255">
    <property type="entry name" value="Paf67"/>
    <property type="match status" value="1"/>
</dbReference>
<dbReference type="SUPFAM" id="SSF48452">
    <property type="entry name" value="TPR-like"/>
    <property type="match status" value="1"/>
</dbReference>
<dbReference type="PROSITE" id="PS50250">
    <property type="entry name" value="PCI"/>
    <property type="match status" value="1"/>
</dbReference>
<comment type="function">
    <text evidence="1 4 7 8">Component of the eukaryotic translation initiation factor 3 (eIF-3) complex, which is required for several steps in the initiation of protein synthesis (PubMed:17581632, PubMed:25849773, PubMed:27462815). The eIF-3 complex associates with the 40S ribosome and facilitates the recruitment of eIF-1, eIF-1A, eIF-2:GTP:methionyl-tRNAi and eIF-5 to form the 43S pre-initiation complex (43S PIC). The eIF-3 complex stimulates mRNA recruitment to the 43S PIC and scanning of the mRNA for AUG recognition. The eIF-3 complex is also required for disassembly and recycling of post-termination ribosomal complexes and subsequently prevents premature joining of the 40S and 60S ribosomal subunits prior to initiation (PubMed:17581632). The eIF-3 complex specifically targets and initiates translation of a subset of mRNAs involved in cell proliferation, including cell cycling, differentiation and apoptosis, and uses different modes of RNA stem-loop binding to exert either translational activation or repression (PubMed:25849773).</text>
</comment>
<comment type="function">
    <text evidence="5">(Microbial infection) In case of FCV infection, plays a role in the ribosomal termination-reinitiation event leading to the translation of VP2 (PubMed:18056426).</text>
</comment>
<comment type="subunit">
    <text evidence="1 7">Component of the eukaryotic translation initiation factor 3 (eIF-3) complex, which is composed of 13 subunits: EIF3A, EIF3B, EIF3C, EIF3D, EIF3E, EIF3F, EIF3G, EIF3H, EIF3I, EIF3J, EIF3K, EIF3L and EIF3M. The eIF-3 complex appears to include 3 stable modules: module A is composed of EIF3A, EIF3B, EIF3G and EIF3I; module B is composed of EIF3F, EIF3H, and EIF3M; and module C is composed of EIF3C, EIF3D, EIF3E, EIF3K and EIF3L. EIF3C of module C binds EIF3B of module A and EIF3H of module B, thereby linking the three modules. EIF3J is a labile subunit that binds to the eIF-3 complex via EIF3B. The eIF-3 complex interacts with RPS6KB1 under conditions of nutrient depletion. Mitogenic stimulation leads to binding and activation of a complex composed of MTOR and RPTOR, leading to phosphorylation and release of RPS6KB1 and binding of EIF4B to eIF-3. Interacts with RRN3.</text>
</comment>
<comment type="interaction">
    <interactant intactId="EBI-373519">
        <id>Q9Y262</id>
    </interactant>
    <interactant intactId="EBI-366696">
        <id>P55884</id>
        <label>EIF3B</label>
    </interactant>
    <organismsDiffer>false</organismsDiffer>
    <experiments>6</experiments>
</comment>
<comment type="interaction">
    <interactant intactId="EBI-373519">
        <id>Q9Y262</id>
    </interactant>
    <interactant intactId="EBI-347740">
        <id>P60228</id>
        <label>EIF3E</label>
    </interactant>
    <organismsDiffer>false</organismsDiffer>
    <experiments>9</experiments>
</comment>
<comment type="interaction">
    <interactant intactId="EBI-373519">
        <id>Q9Y262</id>
    </interactant>
    <interactant intactId="EBI-354344">
        <id>Q9UBQ5</id>
        <label>EIF3K</label>
    </interactant>
    <organismsDiffer>false</organismsDiffer>
    <experiments>17</experiments>
</comment>
<comment type="interaction">
    <interactant intactId="EBI-373519">
        <id>Q9Y262</id>
    </interactant>
    <interactant intactId="EBI-948266">
        <id>O14901</id>
        <label>KLF11</label>
    </interactant>
    <organismsDiffer>false</organismsDiffer>
    <experiments>3</experiments>
</comment>
<comment type="interaction">
    <interactant intactId="EBI-373519">
        <id>Q9Y262</id>
    </interactant>
    <interactant intactId="EBI-2557469">
        <id>Q6NYC8</id>
        <label>PPP1R18</label>
    </interactant>
    <organismsDiffer>false</organismsDiffer>
    <experiments>3</experiments>
</comment>
<comment type="interaction">
    <interactant intactId="EBI-373519">
        <id>Q9Y262</id>
    </interactant>
    <interactant intactId="EBI-6248094">
        <id>Q9Q2G4</id>
        <label>ORF</label>
    </interactant>
    <organismsDiffer>true</organismsDiffer>
    <experiments>5</experiments>
</comment>
<comment type="subcellular location">
    <subcellularLocation>
        <location evidence="1">Cytoplasm</location>
    </subcellularLocation>
</comment>
<comment type="alternative products">
    <event type="alternative splicing"/>
    <isoform>
        <id>Q9Y262-1</id>
        <name>1</name>
        <sequence type="displayed"/>
    </isoform>
    <isoform>
        <id>Q9Y262-2</id>
        <name>2</name>
        <sequence type="described" ref="VSP_045881"/>
    </isoform>
</comment>
<comment type="mass spectrometry" mass="66637.9" method="Unknown" evidence="3"/>
<comment type="mass spectrometry" mass="66640.2" error="0.5" method="MALDI" evidence="6"/>
<comment type="similarity">
    <text evidence="1">Belongs to the eIF-3 subunit L family.</text>
</comment>
<comment type="sequence caution" evidence="10">
    <conflict type="erroneous initiation">
        <sequence resource="EMBL-CDS" id="CAG30322"/>
    </conflict>
</comment>
<name>EIF3L_HUMAN</name>
<feature type="initiator methionine" description="Removed" evidence="1 3 11 13">
    <location>
        <position position="1"/>
    </location>
</feature>
<feature type="chain" id="PRO_0000084162" description="Eukaryotic translation initiation factor 3 subunit L">
    <location>
        <begin position="2"/>
        <end position="564"/>
    </location>
</feature>
<feature type="domain" description="PCI" evidence="2">
    <location>
        <begin position="331"/>
        <end position="537"/>
    </location>
</feature>
<feature type="modified residue" description="N-acetylserine" evidence="1 3 11 13">
    <location>
        <position position="2"/>
    </location>
</feature>
<feature type="modified residue" description="Phosphoserine" evidence="14">
    <location>
        <position position="21"/>
    </location>
</feature>
<feature type="modified residue" description="N6-acetyllysine" evidence="12">
    <location>
        <position position="465"/>
    </location>
</feature>
<feature type="modified residue" description="N6-acetyllysine" evidence="12">
    <location>
        <position position="549"/>
    </location>
</feature>
<feature type="splice variant" id="VSP_045881" description="In isoform 2." evidence="9">
    <location>
        <begin position="146"/>
        <end position="193"/>
    </location>
</feature>
<feature type="sequence conflict" description="In Ref. 2; AAQ13507." evidence="10" ref="2">
    <original>T</original>
    <variation>I</variation>
    <location>
        <position position="353"/>
    </location>
</feature>
<feature type="sequence conflict" description="In Ref. 5; BAD96249." evidence="10" ref="5">
    <original>M</original>
    <variation>V</variation>
    <location>
        <position position="377"/>
    </location>
</feature>
<feature type="sequence conflict" description="In Ref. 5; BAD96216." evidence="10" ref="5">
    <original>H</original>
    <variation>Y</variation>
    <location>
        <position position="432"/>
    </location>
</feature>
<feature type="sequence conflict" description="In Ref. 5; BAD96249." evidence="10" ref="5">
    <original>N</original>
    <variation>D</variation>
    <location>
        <position position="434"/>
    </location>
</feature>
<feature type="sequence conflict" description="In Ref. 4; BAG63674." evidence="10" ref="4">
    <original>F</original>
    <variation>L</variation>
    <location>
        <position position="513"/>
    </location>
</feature>
<feature type="sequence conflict" description="In Ref. 4; BAG63674." evidence="10" ref="4">
    <original>I</original>
    <variation>T</variation>
    <location>
        <position position="528"/>
    </location>
</feature>
<feature type="sequence conflict" description="In Ref. 4; BAG63674." evidence="10" ref="4">
    <original>K</original>
    <variation>R</variation>
    <location>
        <position position="558"/>
    </location>
</feature>
<feature type="helix" evidence="16">
    <location>
        <begin position="50"/>
        <end position="76"/>
    </location>
</feature>
<feature type="helix" evidence="16">
    <location>
        <begin position="81"/>
        <end position="96"/>
    </location>
</feature>
<feature type="helix" evidence="16">
    <location>
        <begin position="98"/>
        <end position="106"/>
    </location>
</feature>
<feature type="strand" evidence="16">
    <location>
        <begin position="108"/>
        <end position="110"/>
    </location>
</feature>
<feature type="turn" evidence="16">
    <location>
        <begin position="115"/>
        <end position="118"/>
    </location>
</feature>
<feature type="helix" evidence="16">
    <location>
        <begin position="119"/>
        <end position="122"/>
    </location>
</feature>
<feature type="helix" evidence="16">
    <location>
        <begin position="126"/>
        <end position="143"/>
    </location>
</feature>
<feature type="helix" evidence="16">
    <location>
        <begin position="150"/>
        <end position="168"/>
    </location>
</feature>
<feature type="helix" evidence="15">
    <location>
        <begin position="184"/>
        <end position="206"/>
    </location>
</feature>
<feature type="helix" evidence="15">
    <location>
        <begin position="209"/>
        <end position="217"/>
    </location>
</feature>
<feature type="strand" evidence="15">
    <location>
        <begin position="218"/>
        <end position="220"/>
    </location>
</feature>
<feature type="helix" evidence="15">
    <location>
        <begin position="224"/>
        <end position="246"/>
    </location>
</feature>
<feature type="helix" evidence="15">
    <location>
        <begin position="253"/>
        <end position="267"/>
    </location>
</feature>
<feature type="helix" evidence="15">
    <location>
        <begin position="275"/>
        <end position="289"/>
    </location>
</feature>
<feature type="turn" evidence="16">
    <location>
        <begin position="293"/>
        <end position="296"/>
    </location>
</feature>
<feature type="helix" evidence="15">
    <location>
        <begin position="298"/>
        <end position="302"/>
    </location>
</feature>
<feature type="helix" evidence="16">
    <location>
        <begin position="304"/>
        <end position="307"/>
    </location>
</feature>
<feature type="helix" evidence="15">
    <location>
        <begin position="312"/>
        <end position="325"/>
    </location>
</feature>
<feature type="helix" evidence="15">
    <location>
        <begin position="329"/>
        <end position="334"/>
    </location>
</feature>
<feature type="helix" evidence="15">
    <location>
        <begin position="336"/>
        <end position="341"/>
    </location>
</feature>
<feature type="helix" evidence="15">
    <location>
        <begin position="358"/>
        <end position="374"/>
    </location>
</feature>
<feature type="turn" evidence="15">
    <location>
        <begin position="383"/>
        <end position="385"/>
    </location>
</feature>
<feature type="helix" evidence="15">
    <location>
        <begin position="388"/>
        <end position="400"/>
    </location>
</feature>
<feature type="turn" evidence="15">
    <location>
        <begin position="401"/>
        <end position="403"/>
    </location>
</feature>
<feature type="helix" evidence="15">
    <location>
        <begin position="406"/>
        <end position="416"/>
    </location>
</feature>
<feature type="strand" evidence="16">
    <location>
        <begin position="428"/>
        <end position="430"/>
    </location>
</feature>
<feature type="helix" evidence="15">
    <location>
        <begin position="439"/>
        <end position="461"/>
    </location>
</feature>
<feature type="strand" evidence="15">
    <location>
        <begin position="468"/>
        <end position="470"/>
    </location>
</feature>
<feature type="helix" evidence="15">
    <location>
        <begin position="472"/>
        <end position="480"/>
    </location>
</feature>
<feature type="helix" evidence="15">
    <location>
        <begin position="491"/>
        <end position="496"/>
    </location>
</feature>
<feature type="strand" evidence="15">
    <location>
        <begin position="499"/>
        <end position="501"/>
    </location>
</feature>
<feature type="strand" evidence="15">
    <location>
        <begin position="504"/>
        <end position="506"/>
    </location>
</feature>
<feature type="turn" evidence="15">
    <location>
        <begin position="508"/>
        <end position="510"/>
    </location>
</feature>
<feature type="strand" evidence="15">
    <location>
        <begin position="513"/>
        <end position="515"/>
    </location>
</feature>
<feature type="strand" evidence="16">
    <location>
        <begin position="518"/>
        <end position="524"/>
    </location>
</feature>
<feature type="helix" evidence="15">
    <location>
        <begin position="527"/>
        <end position="548"/>
    </location>
</feature>
<protein>
    <recommendedName>
        <fullName evidence="1">Eukaryotic translation initiation factor 3 subunit L</fullName>
        <shortName evidence="1">eIF3l</shortName>
    </recommendedName>
    <alternativeName>
        <fullName evidence="1">Eukaryotic translation initiation factor 3 subunit 6-interacting protein</fullName>
    </alternativeName>
    <alternativeName>
        <fullName evidence="1">Eukaryotic translation initiation factor 3 subunit E-interacting protein</fullName>
    </alternativeName>
</protein>
<organism>
    <name type="scientific">Homo sapiens</name>
    <name type="common">Human</name>
    <dbReference type="NCBI Taxonomy" id="9606"/>
    <lineage>
        <taxon>Eukaryota</taxon>
        <taxon>Metazoa</taxon>
        <taxon>Chordata</taxon>
        <taxon>Craniata</taxon>
        <taxon>Vertebrata</taxon>
        <taxon>Euteleostomi</taxon>
        <taxon>Mammalia</taxon>
        <taxon>Eutheria</taxon>
        <taxon>Euarchontoglires</taxon>
        <taxon>Primates</taxon>
        <taxon>Haplorrhini</taxon>
        <taxon>Catarrhini</taxon>
        <taxon>Hominidae</taxon>
        <taxon>Homo</taxon>
    </lineage>
</organism>
<keyword id="KW-0002">3D-structure</keyword>
<keyword id="KW-0007">Acetylation</keyword>
<keyword id="KW-0025">Alternative splicing</keyword>
<keyword id="KW-0963">Cytoplasm</keyword>
<keyword id="KW-0396">Initiation factor</keyword>
<keyword id="KW-0597">Phosphoprotein</keyword>
<keyword id="KW-0648">Protein biosynthesis</keyword>
<keyword id="KW-1267">Proteomics identification</keyword>
<keyword id="KW-1185">Reference proteome</keyword>
<evidence type="ECO:0000255" key="1">
    <source>
        <dbReference type="HAMAP-Rule" id="MF_03011"/>
    </source>
</evidence>
<evidence type="ECO:0000255" key="2">
    <source>
        <dbReference type="PROSITE-ProRule" id="PRU01185"/>
    </source>
</evidence>
<evidence type="ECO:0000269" key="3">
    <source>
    </source>
</evidence>
<evidence type="ECO:0000269" key="4">
    <source>
    </source>
</evidence>
<evidence type="ECO:0000269" key="5">
    <source>
    </source>
</evidence>
<evidence type="ECO:0000269" key="6">
    <source>
    </source>
</evidence>
<evidence type="ECO:0000269" key="7">
    <source>
    </source>
</evidence>
<evidence type="ECO:0000269" key="8">
    <source>
    </source>
</evidence>
<evidence type="ECO:0000303" key="9">
    <source>
    </source>
</evidence>
<evidence type="ECO:0000305" key="10"/>
<evidence type="ECO:0007744" key="11">
    <source>
    </source>
</evidence>
<evidence type="ECO:0007744" key="12">
    <source>
    </source>
</evidence>
<evidence type="ECO:0007744" key="13">
    <source>
    </source>
</evidence>
<evidence type="ECO:0007744" key="14">
    <source>
    </source>
</evidence>
<evidence type="ECO:0007829" key="15">
    <source>
        <dbReference type="PDB" id="6YBD"/>
    </source>
</evidence>
<evidence type="ECO:0007829" key="16">
    <source>
        <dbReference type="PDB" id="8RG0"/>
    </source>
</evidence>
<accession>Q9Y262</accession>
<accession>B2RDG6</accession>
<accession>B4DYB2</accession>
<accession>G8JLH4</accession>
<accession>Q53HQ1</accession>
<accession>Q53HT4</accession>
<accession>Q5QTR1</accession>
<accession>Q5TI15</accession>
<accession>Q6ICD2</accession>
<gene>
    <name evidence="1" type="primary">EIF3L</name>
    <name evidence="1" type="synonym">EIF3EIP</name>
    <name evidence="1" type="synonym">EIF3S6IP</name>
    <name type="ORF">HSPC021</name>
    <name type="ORF">HSPC025</name>
    <name type="ORF">MSTP005</name>
</gene>
<sequence length="564" mass="66727">MSYPADDYESEAAYDPYAYPSDYDMHTGDPKQDLAYERQYEQQTYQVIPEVIKNFIQYFHKTVSDLIDQKVYELQASRVSSDVIDQKVYEIQDIYENSWTKLTERFFKNTPWPEAEAIAPQVGNDAVFLILYKELYYRHIYAKVSGGPSLEQRFESYYNYCNLFNYILNADGPAPLELPNQWLWDIIDEFIYQFQSFSQYRCKTAKKSEEEIDFLRSNPKIWNVHSVLNVLHSLVDKSNINRQLEVYTSGGDPESVAGEYGRHSLYKMLGYFSLVGLLRLHSLLGDYYQAIKVLENIELNKKSMYSRVPECQVTTYYYVGFAYLMMRRYQDAIRVFANILLYIQRTKSMFQRTTYKYEMINKQNEQMHALLAIALTMYPMRIDESIHLQLREKYGDKMLRMQKGDPQVYEELFSYSCPKFLSPVVPNYDNVHPNYHKEPFLQQLKVFSDEVQQQAQLSTIRSFLKLYTTMPVAKLAGFLDLTEQEFRIQLLVFKHKMKNLVWTSGISALDGEFQSASEVDFYIDKDMIHIADTKVARRYGDFFIRQIHKFEELNRTLKKMGQRP</sequence>